<organism>
    <name type="scientific">Streptococcus pyogenes serotype M12 (strain MGAS9429)</name>
    <dbReference type="NCBI Taxonomy" id="370551"/>
    <lineage>
        <taxon>Bacteria</taxon>
        <taxon>Bacillati</taxon>
        <taxon>Bacillota</taxon>
        <taxon>Bacilli</taxon>
        <taxon>Lactobacillales</taxon>
        <taxon>Streptococcaceae</taxon>
        <taxon>Streptococcus</taxon>
    </lineage>
</organism>
<protein>
    <recommendedName>
        <fullName evidence="1">Glycerol-3-phosphate acyltransferase</fullName>
    </recommendedName>
    <alternativeName>
        <fullName evidence="1">Acyl-PO4 G3P acyltransferase</fullName>
    </alternativeName>
    <alternativeName>
        <fullName evidence="1">Acyl-phosphate--glycerol-3-phosphate acyltransferase</fullName>
    </alternativeName>
    <alternativeName>
        <fullName evidence="1">G3P acyltransferase</fullName>
        <shortName evidence="1">GPAT</shortName>
        <ecNumber evidence="1">2.3.1.275</ecNumber>
    </alternativeName>
    <alternativeName>
        <fullName evidence="1">Lysophosphatidic acid synthase</fullName>
        <shortName evidence="1">LPA synthase</shortName>
    </alternativeName>
</protein>
<keyword id="KW-1003">Cell membrane</keyword>
<keyword id="KW-0444">Lipid biosynthesis</keyword>
<keyword id="KW-0443">Lipid metabolism</keyword>
<keyword id="KW-0472">Membrane</keyword>
<keyword id="KW-0594">Phospholipid biosynthesis</keyword>
<keyword id="KW-1208">Phospholipid metabolism</keyword>
<keyword id="KW-0808">Transferase</keyword>
<keyword id="KW-0812">Transmembrane</keyword>
<keyword id="KW-1133">Transmembrane helix</keyword>
<reference key="1">
    <citation type="journal article" date="2006" name="Proc. Natl. Acad. Sci. U.S.A.">
        <title>Molecular genetic anatomy of inter- and intraserotype variation in the human bacterial pathogen group A Streptococcus.</title>
        <authorList>
            <person name="Beres S.B."/>
            <person name="Richter E.W."/>
            <person name="Nagiec M.J."/>
            <person name="Sumby P."/>
            <person name="Porcella S.F."/>
            <person name="DeLeo F.R."/>
            <person name="Musser J.M."/>
        </authorList>
    </citation>
    <scope>NUCLEOTIDE SEQUENCE [LARGE SCALE GENOMIC DNA]</scope>
    <source>
        <strain>MGAS9429</strain>
    </source>
</reference>
<evidence type="ECO:0000255" key="1">
    <source>
        <dbReference type="HAMAP-Rule" id="MF_01043"/>
    </source>
</evidence>
<evidence type="ECO:0000305" key="2"/>
<accession>Q1JM58</accession>
<name>PLSY_STRPC</name>
<sequence>MKLLLFITIAYLLGSIPTGLWIGQYFYHINLREHGSGNTGTTNTFRILGVKAGTATLAIDMFKGTLSILLPIIFGMTSISSIAIGFFAVLGHTFPIFANFKGGKAVATSAGVLLGFAPLYLFFLASIFVLVLYLFSMISLASVVSAIVGVLSVLTFPAIHFLLPNYDYFLTFIVILLAFIIIIRHKDNISRIKHHTENLIPWGLNLSKQVPKK</sequence>
<proteinExistence type="inferred from homology"/>
<comment type="function">
    <text evidence="1">Catalyzes the transfer of an acyl group from acyl-phosphate (acyl-PO(4)) to glycerol-3-phosphate (G3P) to form lysophosphatidic acid (LPA). This enzyme utilizes acyl-phosphate as fatty acyl donor, but not acyl-CoA or acyl-ACP.</text>
</comment>
<comment type="catalytic activity">
    <reaction evidence="1">
        <text>an acyl phosphate + sn-glycerol 3-phosphate = a 1-acyl-sn-glycero-3-phosphate + phosphate</text>
        <dbReference type="Rhea" id="RHEA:34075"/>
        <dbReference type="ChEBI" id="CHEBI:43474"/>
        <dbReference type="ChEBI" id="CHEBI:57597"/>
        <dbReference type="ChEBI" id="CHEBI:57970"/>
        <dbReference type="ChEBI" id="CHEBI:59918"/>
        <dbReference type="EC" id="2.3.1.275"/>
    </reaction>
</comment>
<comment type="pathway">
    <text evidence="1">Lipid metabolism; phospholipid metabolism.</text>
</comment>
<comment type="subunit">
    <text evidence="1">Probably interacts with PlsX.</text>
</comment>
<comment type="subcellular location">
    <subcellularLocation>
        <location evidence="1">Cell membrane</location>
        <topology evidence="1">Multi-pass membrane protein</topology>
    </subcellularLocation>
</comment>
<comment type="similarity">
    <text evidence="1">Belongs to the PlsY family.</text>
</comment>
<comment type="sequence caution" evidence="2">
    <conflict type="erroneous initiation">
        <sequence resource="EMBL-CDS" id="ABF31954"/>
    </conflict>
</comment>
<gene>
    <name evidence="1" type="primary">plsY</name>
    <name type="ordered locus">MGAS9429_Spy0766</name>
</gene>
<feature type="chain" id="PRO_0000250336" description="Glycerol-3-phosphate acyltransferase">
    <location>
        <begin position="1"/>
        <end position="213"/>
    </location>
</feature>
<feature type="transmembrane region" description="Helical" evidence="1">
    <location>
        <begin position="3"/>
        <end position="23"/>
    </location>
</feature>
<feature type="transmembrane region" description="Helical" evidence="1">
    <location>
        <begin position="68"/>
        <end position="88"/>
    </location>
</feature>
<feature type="transmembrane region" description="Helical" evidence="1">
    <location>
        <begin position="112"/>
        <end position="132"/>
    </location>
</feature>
<feature type="transmembrane region" description="Helical" evidence="1">
    <location>
        <begin position="134"/>
        <end position="154"/>
    </location>
</feature>
<feature type="transmembrane region" description="Helical" evidence="1">
    <location>
        <begin position="163"/>
        <end position="183"/>
    </location>
</feature>
<dbReference type="EC" id="2.3.1.275" evidence="1"/>
<dbReference type="EMBL" id="CP000259">
    <property type="protein sequence ID" value="ABF31954.1"/>
    <property type="status" value="ALT_INIT"/>
    <property type="molecule type" value="Genomic_DNA"/>
</dbReference>
<dbReference type="RefSeq" id="WP_002984911.1">
    <property type="nucleotide sequence ID" value="NC_008021.1"/>
</dbReference>
<dbReference type="SMR" id="Q1JM58"/>
<dbReference type="GeneID" id="69900991"/>
<dbReference type="KEGG" id="spk:MGAS9429_Spy0766"/>
<dbReference type="HOGENOM" id="CLU_081254_4_0_9"/>
<dbReference type="UniPathway" id="UPA00085"/>
<dbReference type="Proteomes" id="UP000002433">
    <property type="component" value="Chromosome"/>
</dbReference>
<dbReference type="GO" id="GO:0005886">
    <property type="term" value="C:plasma membrane"/>
    <property type="evidence" value="ECO:0007669"/>
    <property type="project" value="UniProtKB-SubCell"/>
</dbReference>
<dbReference type="GO" id="GO:0043772">
    <property type="term" value="F:acyl-phosphate glycerol-3-phosphate acyltransferase activity"/>
    <property type="evidence" value="ECO:0007669"/>
    <property type="project" value="UniProtKB-UniRule"/>
</dbReference>
<dbReference type="GO" id="GO:0008654">
    <property type="term" value="P:phospholipid biosynthetic process"/>
    <property type="evidence" value="ECO:0007669"/>
    <property type="project" value="UniProtKB-UniRule"/>
</dbReference>
<dbReference type="HAMAP" id="MF_01043">
    <property type="entry name" value="PlsY"/>
    <property type="match status" value="1"/>
</dbReference>
<dbReference type="InterPro" id="IPR003811">
    <property type="entry name" value="G3P_acylTferase_PlsY"/>
</dbReference>
<dbReference type="NCBIfam" id="TIGR00023">
    <property type="entry name" value="glycerol-3-phosphate 1-O-acyltransferase PlsY"/>
    <property type="match status" value="1"/>
</dbReference>
<dbReference type="PANTHER" id="PTHR30309:SF0">
    <property type="entry name" value="GLYCEROL-3-PHOSPHATE ACYLTRANSFERASE-RELATED"/>
    <property type="match status" value="1"/>
</dbReference>
<dbReference type="PANTHER" id="PTHR30309">
    <property type="entry name" value="INNER MEMBRANE PROTEIN YGIH"/>
    <property type="match status" value="1"/>
</dbReference>
<dbReference type="Pfam" id="PF02660">
    <property type="entry name" value="G3P_acyltransf"/>
    <property type="match status" value="1"/>
</dbReference>
<dbReference type="SMART" id="SM01207">
    <property type="entry name" value="G3P_acyltransf"/>
    <property type="match status" value="1"/>
</dbReference>